<proteinExistence type="evidence at protein level"/>
<accession>Q62151</accession>
<accession>C5H3H4</accession>
<accession>C5H3H5</accession>
<accession>C5H3H7</accession>
<accession>C5H3I0</accession>
<accession>C5H7W3</accession>
<accession>C5H7W4</accession>
<accession>C5H7W5</accession>
<accession>C5H7W6</accession>
<accession>C5H7W7</accession>
<accession>C5H7W8</accession>
<accession>C5H7W9</accession>
<accession>O35444</accession>
<accession>Q2PGG1</accession>
<accession>V5R4Y0</accession>
<evidence type="ECO:0000250" key="1">
    <source>
        <dbReference type="UniProtKB" id="Q15109"/>
    </source>
</evidence>
<evidence type="ECO:0000250" key="2">
    <source>
        <dbReference type="UniProtKB" id="Q63495"/>
    </source>
</evidence>
<evidence type="ECO:0000255" key="3"/>
<evidence type="ECO:0000255" key="4">
    <source>
        <dbReference type="PROSITE-ProRule" id="PRU00114"/>
    </source>
</evidence>
<evidence type="ECO:0000256" key="5">
    <source>
        <dbReference type="SAM" id="MobiDB-lite"/>
    </source>
</evidence>
<evidence type="ECO:0000269" key="6">
    <source>
    </source>
</evidence>
<evidence type="ECO:0000269" key="7">
    <source>
    </source>
</evidence>
<evidence type="ECO:0000269" key="8">
    <source>
    </source>
</evidence>
<evidence type="ECO:0000269" key="9">
    <source>
    </source>
</evidence>
<evidence type="ECO:0000269" key="10">
    <source>
    </source>
</evidence>
<evidence type="ECO:0000269" key="11">
    <source>
    </source>
</evidence>
<evidence type="ECO:0000269" key="12">
    <source>
    </source>
</evidence>
<evidence type="ECO:0000269" key="13">
    <source>
    </source>
</evidence>
<evidence type="ECO:0000269" key="14">
    <source>
    </source>
</evidence>
<evidence type="ECO:0000269" key="15">
    <source>
    </source>
</evidence>
<evidence type="ECO:0000269" key="16">
    <source>
    </source>
</evidence>
<evidence type="ECO:0000269" key="17">
    <source>
    </source>
</evidence>
<evidence type="ECO:0000269" key="18">
    <source>
    </source>
</evidence>
<evidence type="ECO:0000269" key="19">
    <source>
    </source>
</evidence>
<evidence type="ECO:0000303" key="20">
    <source>
    </source>
</evidence>
<evidence type="ECO:0000303" key="21">
    <source>
    </source>
</evidence>
<evidence type="ECO:0000303" key="22">
    <source>
    </source>
</evidence>
<evidence type="ECO:0000305" key="23"/>
<evidence type="ECO:0000312" key="24">
    <source>
        <dbReference type="EMBL" id="AAB82007.1"/>
    </source>
</evidence>
<evidence type="ECO:0000312" key="25">
    <source>
        <dbReference type="EMBL" id="AAH61182.1"/>
    </source>
</evidence>
<evidence type="ECO:0000312" key="26">
    <source>
        <dbReference type="EMBL" id="ACD35949.1"/>
    </source>
</evidence>
<evidence type="ECO:0000312" key="27">
    <source>
        <dbReference type="EMBL" id="AHB30242.1"/>
    </source>
</evidence>
<evidence type="ECO:0000312" key="28">
    <source>
        <dbReference type="EMBL" id="BAE72665.1"/>
    </source>
</evidence>
<evidence type="ECO:0000312" key="29">
    <source>
        <dbReference type="EMBL" id="CT009767"/>
    </source>
</evidence>
<evidence type="ECO:0000312" key="30">
    <source>
        <dbReference type="EMBL" id="EDL26799.1"/>
    </source>
</evidence>
<evidence type="ECO:0000312" key="31">
    <source>
        <dbReference type="EMBL" id="EDL26800.1"/>
    </source>
</evidence>
<evidence type="ECO:0000312" key="32">
    <source>
        <dbReference type="Proteomes" id="UP000000589"/>
    </source>
</evidence>
<evidence type="ECO:0007744" key="33">
    <source>
        <dbReference type="PDB" id="4IM8"/>
    </source>
</evidence>
<evidence type="ECO:0007744" key="34">
    <source>
    </source>
</evidence>
<sequence>MPAGTAARAWVLVLALWGAVAGGQNITARIGEPLVLSCKGAPKKPPQQLEWKLNTGRTEAWKVLSPQGGPWDSVARILPNGSLLLPATGIVDEGTFRCRATNRRGKEVKSNYRVRVYQIPGKPEIVDPASELTASVPNKVGTCVSEGSYPAGTLSWHLDGKLLIPDGKETLVKEETRRHPETGLFTLRSELTVIPTQGGTHPTFSCSFSLGLPRRRPLNTAPIQLRVREPGPPEGIQLLVEPEGGIVAPGGTVTLTCAISAQPPPQVHWIKDGAPLPLAPSPVLLLPEVGHEDEGTYSCVATHPSHGPQESPPVSIRVTETGDEGPAEGSVGESGLGTLALALGILGGLGVVALLVGAILWRKRQPRREERKAPESQEDEEERAELNQSEEAEMPENGAGGP</sequence>
<organism>
    <name type="scientific">Mus musculus</name>
    <name type="common">Mouse</name>
    <dbReference type="NCBI Taxonomy" id="10090"/>
    <lineage>
        <taxon>Eukaryota</taxon>
        <taxon>Metazoa</taxon>
        <taxon>Chordata</taxon>
        <taxon>Craniata</taxon>
        <taxon>Vertebrata</taxon>
        <taxon>Euteleostomi</taxon>
        <taxon>Mammalia</taxon>
        <taxon>Eutheria</taxon>
        <taxon>Euarchontoglires</taxon>
        <taxon>Glires</taxon>
        <taxon>Rodentia</taxon>
        <taxon>Myomorpha</taxon>
        <taxon>Muroidea</taxon>
        <taxon>Muridae</taxon>
        <taxon>Murinae</taxon>
        <taxon>Mus</taxon>
        <taxon>Mus</taxon>
    </lineage>
</organism>
<protein>
    <recommendedName>
        <fullName>Advanced glycosylation end product-specific receptor</fullName>
    </recommendedName>
    <alternativeName>
        <fullName>Receptor for advanced glycosylation end products</fullName>
    </alternativeName>
</protein>
<dbReference type="EMBL" id="L33412">
    <property type="protein sequence ID" value="AAA40040.1"/>
    <property type="molecule type" value="mRNA"/>
</dbReference>
<dbReference type="EMBL" id="AB207883">
    <property type="protein sequence ID" value="BAE72665.1"/>
    <property type="molecule type" value="mRNA"/>
</dbReference>
<dbReference type="EMBL" id="EU520325">
    <property type="protein sequence ID" value="ACD35949.1"/>
    <property type="molecule type" value="mRNA"/>
</dbReference>
<dbReference type="EMBL" id="EU570240">
    <property type="protein sequence ID" value="ACE63492.1"/>
    <property type="molecule type" value="mRNA"/>
</dbReference>
<dbReference type="EMBL" id="EU570241">
    <property type="protein sequence ID" value="ACE63493.1"/>
    <property type="molecule type" value="mRNA"/>
</dbReference>
<dbReference type="EMBL" id="EU570242">
    <property type="protein sequence ID" value="ACE63494.1"/>
    <property type="molecule type" value="mRNA"/>
</dbReference>
<dbReference type="EMBL" id="EU570243">
    <property type="protein sequence ID" value="ACE63495.1"/>
    <property type="molecule type" value="mRNA"/>
</dbReference>
<dbReference type="EMBL" id="EU570244">
    <property type="protein sequence ID" value="ACE63496.1"/>
    <property type="molecule type" value="mRNA"/>
</dbReference>
<dbReference type="EMBL" id="EU570245">
    <property type="protein sequence ID" value="ACE63497.1"/>
    <property type="molecule type" value="mRNA"/>
</dbReference>
<dbReference type="EMBL" id="EU570246">
    <property type="protein sequence ID" value="ACE63498.1"/>
    <property type="molecule type" value="mRNA"/>
</dbReference>
<dbReference type="EMBL" id="EU570247">
    <property type="protein sequence ID" value="ACE63499.1"/>
    <property type="molecule type" value="mRNA"/>
</dbReference>
<dbReference type="EMBL" id="EU906857">
    <property type="protein sequence ID" value="ACK28143.1"/>
    <property type="molecule type" value="mRNA"/>
</dbReference>
<dbReference type="EMBL" id="EU906858">
    <property type="protein sequence ID" value="ACK28144.1"/>
    <property type="molecule type" value="mRNA"/>
</dbReference>
<dbReference type="EMBL" id="EU906859">
    <property type="protein sequence ID" value="ACK28145.1"/>
    <property type="molecule type" value="mRNA"/>
</dbReference>
<dbReference type="EMBL" id="EU906860">
    <property type="protein sequence ID" value="ACK28146.1"/>
    <property type="molecule type" value="mRNA"/>
</dbReference>
<dbReference type="EMBL" id="EU906861">
    <property type="protein sequence ID" value="ACK28147.1"/>
    <property type="molecule type" value="mRNA"/>
</dbReference>
<dbReference type="EMBL" id="EU906862">
    <property type="protein sequence ID" value="ACK28148.1"/>
    <property type="molecule type" value="mRNA"/>
</dbReference>
<dbReference type="EMBL" id="EU906863">
    <property type="protein sequence ID" value="ACK28149.1"/>
    <property type="molecule type" value="mRNA"/>
</dbReference>
<dbReference type="EMBL" id="EU906864">
    <property type="protein sequence ID" value="ACK28150.1"/>
    <property type="molecule type" value="mRNA"/>
</dbReference>
<dbReference type="EMBL" id="EU906865">
    <property type="protein sequence ID" value="ACK28151.1"/>
    <property type="molecule type" value="mRNA"/>
</dbReference>
<dbReference type="EMBL" id="KC692918">
    <property type="protein sequence ID" value="AHB30242.1"/>
    <property type="molecule type" value="mRNA"/>
</dbReference>
<dbReference type="EMBL" id="AF030001">
    <property type="protein sequence ID" value="AAB82007.1"/>
    <property type="molecule type" value="Genomic_DNA"/>
</dbReference>
<dbReference type="EMBL" id="CT009767">
    <property type="status" value="NOT_ANNOTATED_CDS"/>
    <property type="molecule type" value="Genomic_DNA"/>
</dbReference>
<dbReference type="EMBL" id="CH466666">
    <property type="protein sequence ID" value="EDL26799.1"/>
    <property type="molecule type" value="Genomic_DNA"/>
</dbReference>
<dbReference type="EMBL" id="CH466666">
    <property type="protein sequence ID" value="EDL26800.1"/>
    <property type="molecule type" value="Genomic_DNA"/>
</dbReference>
<dbReference type="EMBL" id="BC061182">
    <property type="protein sequence ID" value="AAH61182.1"/>
    <property type="molecule type" value="mRNA"/>
</dbReference>
<dbReference type="CCDS" id="CCDS28649.1">
    <molecule id="Q62151-1"/>
</dbReference>
<dbReference type="CCDS" id="CCDS70795.1">
    <molecule id="Q62151-3"/>
</dbReference>
<dbReference type="CCDS" id="CCDS70796.1">
    <molecule id="Q62151-4"/>
</dbReference>
<dbReference type="PIR" id="T09062">
    <property type="entry name" value="T09062"/>
</dbReference>
<dbReference type="RefSeq" id="NP_001258351.1">
    <molecule id="Q62151-3"/>
    <property type="nucleotide sequence ID" value="NM_001271422.1"/>
</dbReference>
<dbReference type="RefSeq" id="NP_001258352.1">
    <molecule id="Q62151-4"/>
    <property type="nucleotide sequence ID" value="NM_001271423.1"/>
</dbReference>
<dbReference type="RefSeq" id="NP_031451.2">
    <molecule id="Q62151-1"/>
    <property type="nucleotide sequence ID" value="NM_007425.3"/>
</dbReference>
<dbReference type="PDB" id="4IM8">
    <property type="method" value="X-ray"/>
    <property type="resolution" value="3.50 A"/>
    <property type="chains" value="A=23-230"/>
</dbReference>
<dbReference type="PDBsum" id="4IM8"/>
<dbReference type="SMR" id="Q62151"/>
<dbReference type="FunCoup" id="Q62151">
    <property type="interactions" value="29"/>
</dbReference>
<dbReference type="IntAct" id="Q62151">
    <property type="interactions" value="7"/>
</dbReference>
<dbReference type="STRING" id="10090.ENSMUSP00000015596"/>
<dbReference type="ChEMBL" id="CHEMBL2189161"/>
<dbReference type="GlyCosmos" id="Q62151">
    <property type="glycosylation" value="2 sites, No reported glycans"/>
</dbReference>
<dbReference type="GlyGen" id="Q62151">
    <property type="glycosylation" value="2 sites, 1 N-linked glycan (1 site)"/>
</dbReference>
<dbReference type="iPTMnet" id="Q62151"/>
<dbReference type="PhosphoSitePlus" id="Q62151"/>
<dbReference type="jPOST" id="Q62151"/>
<dbReference type="PaxDb" id="10090-ENSMUSP00000015596"/>
<dbReference type="ProteomicsDB" id="255077">
    <molecule id="Q62151-1"/>
</dbReference>
<dbReference type="ProteomicsDB" id="255078">
    <molecule id="Q62151-2"/>
</dbReference>
<dbReference type="ProteomicsDB" id="255079">
    <molecule id="Q62151-3"/>
</dbReference>
<dbReference type="ProteomicsDB" id="255080">
    <molecule id="Q62151-4"/>
</dbReference>
<dbReference type="ProteomicsDB" id="255081">
    <molecule id="Q62151-5"/>
</dbReference>
<dbReference type="ProteomicsDB" id="255082">
    <molecule id="Q62151-6"/>
</dbReference>
<dbReference type="ProteomicsDB" id="255083">
    <molecule id="Q62151-7"/>
</dbReference>
<dbReference type="ProteomicsDB" id="255084">
    <molecule id="Q62151-8"/>
</dbReference>
<dbReference type="ProteomicsDB" id="255086">
    <molecule id="Q62151-10"/>
</dbReference>
<dbReference type="ABCD" id="Q62151">
    <property type="antibodies" value="1 sequenced antibody"/>
</dbReference>
<dbReference type="Antibodypedia" id="28483">
    <property type="antibodies" value="863 antibodies from 46 providers"/>
</dbReference>
<dbReference type="DNASU" id="11596"/>
<dbReference type="Ensembl" id="ENSMUST00000015596.10">
    <molecule id="Q62151-1"/>
    <property type="protein sequence ID" value="ENSMUSP00000015596.4"/>
    <property type="gene ID" value="ENSMUSG00000015452.15"/>
</dbReference>
<dbReference type="Ensembl" id="ENSMUST00000173992.8">
    <molecule id="Q62151-4"/>
    <property type="protein sequence ID" value="ENSMUSP00000134579.2"/>
    <property type="gene ID" value="ENSMUSG00000015452.15"/>
</dbReference>
<dbReference type="Ensembl" id="ENSMUST00000174069.8">
    <molecule id="Q62151-2"/>
    <property type="protein sequence ID" value="ENSMUSP00000133391.2"/>
    <property type="gene ID" value="ENSMUSG00000015452.15"/>
</dbReference>
<dbReference type="Ensembl" id="ENSMUST00000174496.9">
    <molecule id="Q62151-3"/>
    <property type="protein sequence ID" value="ENSMUSP00000134401.2"/>
    <property type="gene ID" value="ENSMUSG00000015452.15"/>
</dbReference>
<dbReference type="GeneID" id="11596"/>
<dbReference type="KEGG" id="mmu:11596"/>
<dbReference type="UCSC" id="uc008ccw.3">
    <property type="organism name" value="mouse"/>
</dbReference>
<dbReference type="UCSC" id="uc008ccx.2">
    <property type="organism name" value="mouse"/>
</dbReference>
<dbReference type="UCSC" id="uc012aqe.2">
    <property type="organism name" value="mouse"/>
</dbReference>
<dbReference type="UCSC" id="uc012aqf.2">
    <property type="organism name" value="mouse"/>
</dbReference>
<dbReference type="UCSC" id="uc012aqg.2">
    <property type="organism name" value="mouse"/>
</dbReference>
<dbReference type="UCSC" id="uc033hcv.1">
    <property type="organism name" value="mouse"/>
</dbReference>
<dbReference type="AGR" id="MGI:893592"/>
<dbReference type="CTD" id="177"/>
<dbReference type="MGI" id="MGI:893592">
    <property type="gene designation" value="Ager"/>
</dbReference>
<dbReference type="VEuPathDB" id="HostDB:ENSMUSG00000015452"/>
<dbReference type="eggNOG" id="ENOG502SQ8N">
    <property type="taxonomic scope" value="Eukaryota"/>
</dbReference>
<dbReference type="GeneTree" id="ENSGT00890000139566"/>
<dbReference type="InParanoid" id="Q62151"/>
<dbReference type="OMA" id="VAMHPSH"/>
<dbReference type="OrthoDB" id="10055806at2759"/>
<dbReference type="PhylomeDB" id="Q62151"/>
<dbReference type="TreeFam" id="TF337155"/>
<dbReference type="Reactome" id="R-MMU-445989">
    <property type="pathway name" value="TAK1-dependent IKK and NF-kappa-B activation"/>
</dbReference>
<dbReference type="Reactome" id="R-MMU-879415">
    <property type="pathway name" value="Advanced glycosylation endproduct receptor signaling"/>
</dbReference>
<dbReference type="Reactome" id="R-MMU-933542">
    <property type="pathway name" value="TRAF6 mediated NF-kB activation"/>
</dbReference>
<dbReference type="BioGRID-ORCS" id="11596">
    <property type="hits" value="0 hits in 79 CRISPR screens"/>
</dbReference>
<dbReference type="ChiTaRS" id="Mok">
    <property type="organism name" value="mouse"/>
</dbReference>
<dbReference type="EvolutionaryTrace" id="Q62151"/>
<dbReference type="PRO" id="PR:Q62151"/>
<dbReference type="Proteomes" id="UP000000589">
    <property type="component" value="Chromosome 17"/>
</dbReference>
<dbReference type="RNAct" id="Q62151">
    <property type="molecule type" value="protein"/>
</dbReference>
<dbReference type="Bgee" id="ENSMUSG00000015452">
    <property type="expression patterns" value="Expressed in right lung lobe and 128 other cell types or tissues"/>
</dbReference>
<dbReference type="GO" id="GO:0016324">
    <property type="term" value="C:apical plasma membrane"/>
    <property type="evidence" value="ECO:0007669"/>
    <property type="project" value="Ensembl"/>
</dbReference>
<dbReference type="GO" id="GO:0030054">
    <property type="term" value="C:cell junction"/>
    <property type="evidence" value="ECO:0007669"/>
    <property type="project" value="Ensembl"/>
</dbReference>
<dbReference type="GO" id="GO:0009986">
    <property type="term" value="C:cell surface"/>
    <property type="evidence" value="ECO:0000250"/>
    <property type="project" value="UniProtKB"/>
</dbReference>
<dbReference type="GO" id="GO:0005769">
    <property type="term" value="C:early endosome"/>
    <property type="evidence" value="ECO:0007669"/>
    <property type="project" value="UniProtKB-SubCell"/>
</dbReference>
<dbReference type="GO" id="GO:0009897">
    <property type="term" value="C:external side of plasma membrane"/>
    <property type="evidence" value="ECO:0000266"/>
    <property type="project" value="MGI"/>
</dbReference>
<dbReference type="GO" id="GO:0005576">
    <property type="term" value="C:extracellular region"/>
    <property type="evidence" value="ECO:0000314"/>
    <property type="project" value="MGI"/>
</dbReference>
<dbReference type="GO" id="GO:0001650">
    <property type="term" value="C:fibrillar center"/>
    <property type="evidence" value="ECO:0007669"/>
    <property type="project" value="Ensembl"/>
</dbReference>
<dbReference type="GO" id="GO:0005634">
    <property type="term" value="C:nucleus"/>
    <property type="evidence" value="ECO:0000314"/>
    <property type="project" value="UniProtKB"/>
</dbReference>
<dbReference type="GO" id="GO:0001891">
    <property type="term" value="C:phagocytic cup"/>
    <property type="evidence" value="ECO:0000250"/>
    <property type="project" value="UniProtKB"/>
</dbReference>
<dbReference type="GO" id="GO:0005886">
    <property type="term" value="C:plasma membrane"/>
    <property type="evidence" value="ECO:0000314"/>
    <property type="project" value="MGI"/>
</dbReference>
<dbReference type="GO" id="GO:1904599">
    <property type="term" value="F:advanced glycation end-product binding"/>
    <property type="evidence" value="ECO:0000314"/>
    <property type="project" value="MGI"/>
</dbReference>
<dbReference type="GO" id="GO:0001540">
    <property type="term" value="F:amyloid-beta binding"/>
    <property type="evidence" value="ECO:0007669"/>
    <property type="project" value="Ensembl"/>
</dbReference>
<dbReference type="GO" id="GO:0003677">
    <property type="term" value="F:DNA binding"/>
    <property type="evidence" value="ECO:0000250"/>
    <property type="project" value="UniProtKB"/>
</dbReference>
<dbReference type="GO" id="GO:0008201">
    <property type="term" value="F:heparin binding"/>
    <property type="evidence" value="ECO:0000314"/>
    <property type="project" value="MGI"/>
</dbReference>
<dbReference type="GO" id="GO:0042393">
    <property type="term" value="F:histone binding"/>
    <property type="evidence" value="ECO:0000250"/>
    <property type="project" value="UniProtKB"/>
</dbReference>
<dbReference type="GO" id="GO:0042802">
    <property type="term" value="F:identical protein binding"/>
    <property type="evidence" value="ECO:0007669"/>
    <property type="project" value="Ensembl"/>
</dbReference>
<dbReference type="GO" id="GO:0044877">
    <property type="term" value="F:protein-containing complex binding"/>
    <property type="evidence" value="ECO:0007669"/>
    <property type="project" value="Ensembl"/>
</dbReference>
<dbReference type="GO" id="GO:0003723">
    <property type="term" value="F:RNA binding"/>
    <property type="evidence" value="ECO:0000250"/>
    <property type="project" value="UniProtKB"/>
</dbReference>
<dbReference type="GO" id="GO:0044548">
    <property type="term" value="F:S100 protein binding"/>
    <property type="evidence" value="ECO:0000353"/>
    <property type="project" value="UniProtKB"/>
</dbReference>
<dbReference type="GO" id="GO:0038023">
    <property type="term" value="F:signaling receptor activity"/>
    <property type="evidence" value="ECO:0007669"/>
    <property type="project" value="Ensembl"/>
</dbReference>
<dbReference type="GO" id="GO:0048143">
    <property type="term" value="P:astrocyte activation"/>
    <property type="evidence" value="ECO:0007669"/>
    <property type="project" value="Ensembl"/>
</dbReference>
<dbReference type="GO" id="GO:0014002">
    <property type="term" value="P:astrocyte development"/>
    <property type="evidence" value="ECO:0000315"/>
    <property type="project" value="MGI"/>
</dbReference>
<dbReference type="GO" id="GO:1904646">
    <property type="term" value="P:cellular response to amyloid-beta"/>
    <property type="evidence" value="ECO:0000315"/>
    <property type="project" value="ARUK-UCL"/>
</dbReference>
<dbReference type="GO" id="GO:0010255">
    <property type="term" value="P:glucose mediated signaling pathway"/>
    <property type="evidence" value="ECO:0007669"/>
    <property type="project" value="Ensembl"/>
</dbReference>
<dbReference type="GO" id="GO:0050930">
    <property type="term" value="P:induction of positive chemotaxis"/>
    <property type="evidence" value="ECO:0000315"/>
    <property type="project" value="MGI"/>
</dbReference>
<dbReference type="GO" id="GO:0006954">
    <property type="term" value="P:inflammatory response"/>
    <property type="evidence" value="ECO:0000316"/>
    <property type="project" value="MGI"/>
</dbReference>
<dbReference type="GO" id="GO:0007611">
    <property type="term" value="P:learning or memory"/>
    <property type="evidence" value="ECO:0007669"/>
    <property type="project" value="Ensembl"/>
</dbReference>
<dbReference type="GO" id="GO:0001774">
    <property type="term" value="P:microglial cell activation"/>
    <property type="evidence" value="ECO:0000316"/>
    <property type="project" value="ARUK-UCL"/>
</dbReference>
<dbReference type="GO" id="GO:1903523">
    <property type="term" value="P:negative regulation of blood circulation"/>
    <property type="evidence" value="ECO:0000316"/>
    <property type="project" value="ARUK-UCL"/>
</dbReference>
<dbReference type="GO" id="GO:0030336">
    <property type="term" value="P:negative regulation of cell migration"/>
    <property type="evidence" value="ECO:0000266"/>
    <property type="project" value="MGI"/>
</dbReference>
<dbReference type="GO" id="GO:1904597">
    <property type="term" value="P:negative regulation of connective tissue replacement involved in inflammatory response wound healing"/>
    <property type="evidence" value="ECO:0000315"/>
    <property type="project" value="MGI"/>
</dbReference>
<dbReference type="GO" id="GO:0032693">
    <property type="term" value="P:negative regulation of interleukin-10 production"/>
    <property type="evidence" value="ECO:0007669"/>
    <property type="project" value="Ensembl"/>
</dbReference>
<dbReference type="GO" id="GO:1900453">
    <property type="term" value="P:negative regulation of long-term synaptic depression"/>
    <property type="evidence" value="ECO:0007669"/>
    <property type="project" value="Ensembl"/>
</dbReference>
<dbReference type="GO" id="GO:1900272">
    <property type="term" value="P:negative regulation of long-term synaptic potentiation"/>
    <property type="evidence" value="ECO:0000316"/>
    <property type="project" value="ARUK-UCL"/>
</dbReference>
<dbReference type="GO" id="GO:0023057">
    <property type="term" value="P:negative regulation of signaling"/>
    <property type="evidence" value="ECO:0000266"/>
    <property type="project" value="MGI"/>
</dbReference>
<dbReference type="GO" id="GO:0031175">
    <property type="term" value="P:neuron projection development"/>
    <property type="evidence" value="ECO:0007669"/>
    <property type="project" value="Ensembl"/>
</dbReference>
<dbReference type="GO" id="GO:0006909">
    <property type="term" value="P:phagocytosis"/>
    <property type="evidence" value="ECO:0000315"/>
    <property type="project" value="UniProtKB"/>
</dbReference>
<dbReference type="GO" id="GO:0042104">
    <property type="term" value="P:positive regulation of activated T cell proliferation"/>
    <property type="evidence" value="ECO:0007669"/>
    <property type="project" value="Ensembl"/>
</dbReference>
<dbReference type="GO" id="GO:1902993">
    <property type="term" value="P:positive regulation of amyloid precursor protein catabolic process"/>
    <property type="evidence" value="ECO:0007669"/>
    <property type="project" value="Ensembl"/>
</dbReference>
<dbReference type="GO" id="GO:0030335">
    <property type="term" value="P:positive regulation of cell migration"/>
    <property type="evidence" value="ECO:0000266"/>
    <property type="project" value="MGI"/>
</dbReference>
<dbReference type="GO" id="GO:0032722">
    <property type="term" value="P:positive regulation of chemokine production"/>
    <property type="evidence" value="ECO:0000316"/>
    <property type="project" value="ARUK-UCL"/>
</dbReference>
<dbReference type="GO" id="GO:2001200">
    <property type="term" value="P:positive regulation of dendritic cell differentiation"/>
    <property type="evidence" value="ECO:0007669"/>
    <property type="project" value="Ensembl"/>
</dbReference>
<dbReference type="GO" id="GO:2000105">
    <property type="term" value="P:positive regulation of DNA-templated DNA replication"/>
    <property type="evidence" value="ECO:0000250"/>
    <property type="project" value="UniProtKB"/>
</dbReference>
<dbReference type="GO" id="GO:2000781">
    <property type="term" value="P:positive regulation of double-strand break repair"/>
    <property type="evidence" value="ECO:0000315"/>
    <property type="project" value="UniProtKB"/>
</dbReference>
<dbReference type="GO" id="GO:1904472">
    <property type="term" value="P:positive regulation of endothelin production"/>
    <property type="evidence" value="ECO:0000316"/>
    <property type="project" value="ARUK-UCL"/>
</dbReference>
<dbReference type="GO" id="GO:0070374">
    <property type="term" value="P:positive regulation of ERK1 and ERK2 cascade"/>
    <property type="evidence" value="ECO:0007669"/>
    <property type="project" value="Ensembl"/>
</dbReference>
<dbReference type="GO" id="GO:0034116">
    <property type="term" value="P:positive regulation of heterotypic cell-cell adhesion"/>
    <property type="evidence" value="ECO:0007669"/>
    <property type="project" value="Ensembl"/>
</dbReference>
<dbReference type="GO" id="GO:0032731">
    <property type="term" value="P:positive regulation of interleukin-1 beta production"/>
    <property type="evidence" value="ECO:0000316"/>
    <property type="project" value="ARUK-UCL"/>
</dbReference>
<dbReference type="GO" id="GO:0032735">
    <property type="term" value="P:positive regulation of interleukin-12 production"/>
    <property type="evidence" value="ECO:0007669"/>
    <property type="project" value="Ensembl"/>
</dbReference>
<dbReference type="GO" id="GO:0032755">
    <property type="term" value="P:positive regulation of interleukin-6 production"/>
    <property type="evidence" value="ECO:0000316"/>
    <property type="project" value="ARUK-UCL"/>
</dbReference>
<dbReference type="GO" id="GO:0046330">
    <property type="term" value="P:positive regulation of JNK cascade"/>
    <property type="evidence" value="ECO:0007669"/>
    <property type="project" value="Ensembl"/>
</dbReference>
<dbReference type="GO" id="GO:0071639">
    <property type="term" value="P:positive regulation of monocyte chemotactic protein-1 production"/>
    <property type="evidence" value="ECO:0000316"/>
    <property type="project" value="MGI"/>
</dbReference>
<dbReference type="GO" id="GO:2000439">
    <property type="term" value="P:positive regulation of monocyte extravasation"/>
    <property type="evidence" value="ECO:0007669"/>
    <property type="project" value="Ensembl"/>
</dbReference>
<dbReference type="GO" id="GO:1901224">
    <property type="term" value="P:positive regulation of non-canonical NF-kappaB signal transduction"/>
    <property type="evidence" value="ECO:0007669"/>
    <property type="project" value="Ensembl"/>
</dbReference>
<dbReference type="GO" id="GO:1900745">
    <property type="term" value="P:positive regulation of p38MAPK cascade"/>
    <property type="evidence" value="ECO:0007669"/>
    <property type="project" value="Ensembl"/>
</dbReference>
<dbReference type="GO" id="GO:0023056">
    <property type="term" value="P:positive regulation of signaling"/>
    <property type="evidence" value="ECO:0000266"/>
    <property type="project" value="MGI"/>
</dbReference>
<dbReference type="GO" id="GO:0032760">
    <property type="term" value="P:positive regulation of tumor necrosis factor production"/>
    <property type="evidence" value="ECO:0000316"/>
    <property type="project" value="ARUK-UCL"/>
</dbReference>
<dbReference type="GO" id="GO:0072657">
    <property type="term" value="P:protein localization to membrane"/>
    <property type="evidence" value="ECO:0000315"/>
    <property type="project" value="MGI"/>
</dbReference>
<dbReference type="GO" id="GO:2000514">
    <property type="term" value="P:regulation of CD4-positive, alpha-beta T cell activation"/>
    <property type="evidence" value="ECO:0007669"/>
    <property type="project" value="Ensembl"/>
</dbReference>
<dbReference type="GO" id="GO:0050727">
    <property type="term" value="P:regulation of inflammatory response"/>
    <property type="evidence" value="ECO:0000314"/>
    <property type="project" value="UniProtKB"/>
</dbReference>
<dbReference type="GO" id="GO:1900271">
    <property type="term" value="P:regulation of long-term synaptic potentiation"/>
    <property type="evidence" value="ECO:0000315"/>
    <property type="project" value="ARUK-UCL"/>
</dbReference>
<dbReference type="GO" id="GO:1900744">
    <property type="term" value="P:regulation of p38MAPK cascade"/>
    <property type="evidence" value="ECO:0000316"/>
    <property type="project" value="ARUK-UCL"/>
</dbReference>
<dbReference type="GO" id="GO:0150003">
    <property type="term" value="P:regulation of spontaneous synaptic transmission"/>
    <property type="evidence" value="ECO:0007669"/>
    <property type="project" value="Ensembl"/>
</dbReference>
<dbReference type="GO" id="GO:0001914">
    <property type="term" value="P:regulation of T cell mediated cytotoxicity"/>
    <property type="evidence" value="ECO:0007669"/>
    <property type="project" value="Ensembl"/>
</dbReference>
<dbReference type="GO" id="GO:1904645">
    <property type="term" value="P:response to amyloid-beta"/>
    <property type="evidence" value="ECO:0000316"/>
    <property type="project" value="ARUK-UCL"/>
</dbReference>
<dbReference type="GO" id="GO:0001666">
    <property type="term" value="P:response to hypoxia"/>
    <property type="evidence" value="ECO:0000315"/>
    <property type="project" value="MGI"/>
</dbReference>
<dbReference type="GO" id="GO:0045056">
    <property type="term" value="P:transcytosis"/>
    <property type="evidence" value="ECO:0000315"/>
    <property type="project" value="ARUK-UCL"/>
</dbReference>
<dbReference type="GO" id="GO:0150104">
    <property type="term" value="P:transport across blood-brain barrier"/>
    <property type="evidence" value="ECO:0007669"/>
    <property type="project" value="Ensembl"/>
</dbReference>
<dbReference type="CDD" id="cd00096">
    <property type="entry name" value="Ig"/>
    <property type="match status" value="2"/>
</dbReference>
<dbReference type="FunFam" id="2.60.40.10:FF:000649">
    <property type="entry name" value="Advanced glycosylation end product-specific receptor"/>
    <property type="match status" value="1"/>
</dbReference>
<dbReference type="Gene3D" id="2.60.40.10">
    <property type="entry name" value="Immunoglobulins"/>
    <property type="match status" value="3"/>
</dbReference>
<dbReference type="InterPro" id="IPR013162">
    <property type="entry name" value="CD80_C2-set"/>
</dbReference>
<dbReference type="InterPro" id="IPR007110">
    <property type="entry name" value="Ig-like_dom"/>
</dbReference>
<dbReference type="InterPro" id="IPR036179">
    <property type="entry name" value="Ig-like_dom_sf"/>
</dbReference>
<dbReference type="InterPro" id="IPR013783">
    <property type="entry name" value="Ig-like_fold"/>
</dbReference>
<dbReference type="InterPro" id="IPR003006">
    <property type="entry name" value="Ig/MHC_CS"/>
</dbReference>
<dbReference type="InterPro" id="IPR003599">
    <property type="entry name" value="Ig_sub"/>
</dbReference>
<dbReference type="InterPro" id="IPR003598">
    <property type="entry name" value="Ig_sub2"/>
</dbReference>
<dbReference type="InterPro" id="IPR013151">
    <property type="entry name" value="Immunoglobulin_dom"/>
</dbReference>
<dbReference type="InterPro" id="IPR051116">
    <property type="entry name" value="Surface_Rcpt/Adhesion_Mol"/>
</dbReference>
<dbReference type="PANTHER" id="PTHR11973:SF20">
    <property type="entry name" value="ADVANCED GLYCOSYLATION END PRODUCT-SPECIFIC RECEPTOR"/>
    <property type="match status" value="1"/>
</dbReference>
<dbReference type="PANTHER" id="PTHR11973">
    <property type="entry name" value="CELL SURFACE GLYCOPROTEIN MUC18-RELATED"/>
    <property type="match status" value="1"/>
</dbReference>
<dbReference type="Pfam" id="PF08205">
    <property type="entry name" value="C2-set_2"/>
    <property type="match status" value="1"/>
</dbReference>
<dbReference type="Pfam" id="PF00047">
    <property type="entry name" value="ig"/>
    <property type="match status" value="1"/>
</dbReference>
<dbReference type="Pfam" id="PF13895">
    <property type="entry name" value="Ig_2"/>
    <property type="match status" value="1"/>
</dbReference>
<dbReference type="SMART" id="SM00409">
    <property type="entry name" value="IG"/>
    <property type="match status" value="2"/>
</dbReference>
<dbReference type="SMART" id="SM00408">
    <property type="entry name" value="IGc2"/>
    <property type="match status" value="2"/>
</dbReference>
<dbReference type="SUPFAM" id="SSF48726">
    <property type="entry name" value="Immunoglobulin"/>
    <property type="match status" value="3"/>
</dbReference>
<dbReference type="PROSITE" id="PS50835">
    <property type="entry name" value="IG_LIKE"/>
    <property type="match status" value="3"/>
</dbReference>
<dbReference type="PROSITE" id="PS00290">
    <property type="entry name" value="IG_MHC"/>
    <property type="match status" value="1"/>
</dbReference>
<name>RAGE_MOUSE</name>
<comment type="function">
    <text evidence="1 2 6 8 10 11 12 15 17 18">Cell surface pattern recognition receptor that senses endogenous stress signals with a broad ligand repertoire including advanced glycation end products, S100 proteins, high-mobility group box 1 protein/HMGB1, amyloid beta/APP oligomers, nucleic acids, histones, phospholipids and glycosaminoglycans (PubMed:21270403, PubMed:32670276). Advanced glycosylation end products are nonenzymatically glycosylated proteins which accumulate in vascular tissue in aging and at an accelerated rate in diabetes. These ligands accumulate at inflammatory sites during the pathogenesis of various diseases including diabetes, vascular complications, neurodegenerative disorders and cancers, and RAGE transduces their binding into pro-inflammatory responses. Upon ligand binding, uses TIRAP and MYD88 as adapters to transduce the signal ultimately leading to the induction of inflammatory cytokines IL6, IL8 and TNFalpha through activation of NF-kappa-B. Interaction with S100A12 on endothelium, mononuclear phagocytes, and lymphocytes triggers cellular activation, with generation of key pro-inflammatory mediators (By similarity). Interaction with S100B after myocardial infarction may play a role in myocyte apoptosis by activating ERK1/2 and p53/TP53 signaling (By similarity). Contributes to the translocation of amyloid-beta peptide (ABPP) across the cell membrane from the extracellular to the intracellular space in cortical neurons (PubMed:19901339). ABPP-initiated RAGE signaling, especially stimulation of p38 mitogen-activated protein kinase (MAPK), has the capacity to drive a transport system delivering ABPP as a complex with RAGE to the intraneuronal space. Participates in endothelial albumin transcytosis together with HMGB1 through the RAGE/SRC/Caveolin-1 pathway, leading to endothelial hyperpermeability (By similarity). Mediates the loading of HMGB1 in extracellular vesicles (EVs) that shuttle HMGB1 to hepatocytes by transferrin-mediated endocytosis and subsequently promote hepatocyte pyroptosis by activating the NLRP3 inflammasome (By similarity). Binds to DNA and promotes extracellular hypomethylated DNA (CpG DNA) uptake by cells via the endosomal route to activate inflammatory responses (By similarity). Mediates phagocytosis by non-professional phagocytes (NPP) and this is enhanced by binding to ligands including RNA, DNA, HMGB1 and histones (By similarity). Promotes NPP-mediated phagocytosis of Saccharomyces cerevisiae spores by binding to RNA attached to the spore wall (PubMed:35974093). Also promotes NPP-mediated phagocytosis of apoptotic cells (By similarity). Following DNA damage, recruited to DNA double-strand break sites where it colocalizes with the MRN repair complex via interaction with double-strand break repair protein MRE11 (PubMed:28977635). Enhances the endonuclease activity of MRE11, promoting the end resection of damaged DNA (PubMed:28977635). Promotes DNA damage repair in trophoblasts which enhances trophoblast invasion and contributes to placental development and maintenance (By similarity). Protects cells from DNA replication stress by localizing to damaged replication forks where it stabilizes the MCM2-7 complex and promotes faithful progression of the replication fork (By similarity).</text>
</comment>
<comment type="function">
    <molecule>Isoform 2</molecule>
    <text evidence="7">Is able to advanced glycosylation end product (AGE)-induce nuclear factor NF-kappa-B activation.</text>
</comment>
<comment type="function">
    <molecule>Isoform 10</molecule>
    <text evidence="14">Down-regulates receptor for advanced glycosylation end products (RAGE)-ligand induced signaling through various MAPK pathways including ERK1/2, p38 and SAPK/JNK. Significantly affects tumor cell properties through decreasing cell migration, invasion, adhesion and proliferation, and increasing cellular apoptosis. Exhibits drastic inhibition on tumorigenesis in vitro.</text>
</comment>
<comment type="subunit">
    <text evidence="1 6 10 13 15 19">Constitutive homodimer; disulfide-linked. Forms homooligomers (By similarity). Interacts with S100A1 and APP (PubMed:19901339). Interacts with S100B, S100A12 and S100A14 (PubMed:10399917). Interacts with TIRAP (By similarity). Interacts with HMGB1 (By similarity). Interacts with LGP2; this interaction plays an important role in AGER-mediated pro-inflammatory responses and cytokine release (By similarity). Interacts with double-strand break repair protein MRE11 which is a core component of the MRN complex; the interaction enhances MRE11 endonuclease activity and promotes DNA repair (PubMed:28977635). Interacts with the MCM2-7 complex via interaction with complex member MCM2; the interaction is increased following DNA replication stress and stabilizes the MCM2-7 complex at replication forks (PubMed:36807739).</text>
</comment>
<comment type="interaction">
    <interactant intactId="EBI-6665091">
        <id>Q62151</id>
    </interactant>
    <interactant intactId="EBI-642057">
        <id>Q02956</id>
        <label>Prkcz</label>
    </interactant>
    <organismsDiffer>false</organismsDiffer>
    <experiments>7</experiments>
</comment>
<comment type="subcellular location">
    <subcellularLocation>
        <location evidence="1">Cell membrane</location>
        <topology evidence="3">Single-pass type I membrane protein</topology>
    </subcellularLocation>
    <subcellularLocation>
        <location evidence="1">Cell projection</location>
        <location evidence="1">Phagocytic cup</location>
    </subcellularLocation>
    <subcellularLocation>
        <location evidence="1">Early endosome</location>
    </subcellularLocation>
    <subcellularLocation>
        <location evidence="15">Nucleus</location>
    </subcellularLocation>
    <text evidence="15">Nuclear translocation is enhanced by irradiation, hypoxia and reperfusion injury to brain or kidney.</text>
</comment>
<comment type="subcellular location">
    <molecule>Isoform 1</molecule>
    <subcellularLocation>
        <location evidence="1">Cell membrane</location>
        <topology evidence="3">Single-pass type I membrane protein</topology>
    </subcellularLocation>
</comment>
<comment type="subcellular location">
    <molecule>Isoform 2</molecule>
    <subcellularLocation>
        <location evidence="7">Secreted</location>
    </subcellularLocation>
</comment>
<comment type="subcellular location">
    <molecule>Isoform 10</molecule>
    <subcellularLocation>
        <location evidence="14">Cell membrane</location>
        <topology evidence="3">Single-pass membrane protein</topology>
    </subcellularLocation>
</comment>
<comment type="alternative products">
    <event type="alternative splicing"/>
    <isoform>
        <id>Q62151-1</id>
        <name>1</name>
        <name evidence="21">mRAGE</name>
        <sequence type="displayed"/>
    </isoform>
    <isoform>
        <id>Q62151-2</id>
        <name>2</name>
        <name evidence="21">mRAGE_v1</name>
        <name evidence="21">mRAGE_v3</name>
        <name evidence="20">endogenous secretory receptor for AGE (esRAGE)</name>
        <sequence type="described" ref="VSP_058091 VSP_058092"/>
    </isoform>
    <isoform>
        <id>Q62151-3</id>
        <name>3</name>
        <name evidence="21">mRAGE_v4</name>
        <sequence type="described" ref="VSP_058090"/>
    </isoform>
    <isoform>
        <id>Q62151-4</id>
        <name>4</name>
        <name evidence="21">mRAGE_v15</name>
        <sequence type="described" ref="VSP_058080 VSP_058090"/>
    </isoform>
    <isoform>
        <id>Q62151-5</id>
        <name>5</name>
        <name evidence="21">mRAGE_v14</name>
        <sequence type="described" ref="VSP_058089"/>
    </isoform>
    <isoform>
        <id>Q62151-6</id>
        <name>6</name>
        <name evidence="21">mRAGE_v10</name>
        <sequence type="described" ref="VSP_058087 VSP_058088"/>
    </isoform>
    <isoform>
        <id>Q62151-7</id>
        <name>7</name>
        <name evidence="21">mRAGE_v7</name>
        <sequence type="described" ref="VSP_058083 VSP_058086"/>
    </isoform>
    <isoform>
        <id>Q62151-8</id>
        <name>8</name>
        <name evidence="21">mRAGE_v11</name>
        <sequence type="described" ref="VSP_058084 VSP_058085"/>
    </isoform>
    <isoform>
        <id>Q62151-9</id>
        <name>9</name>
        <name evidence="21">mRAGE_v9</name>
        <sequence type="described" ref="VSP_058076 VSP_058082"/>
    </isoform>
    <isoform>
        <id>Q62151-10</id>
        <name>10</name>
        <name evidence="22">RAGE deletion of intracellular domain</name>
        <name evidence="22">RAGEdeltaICD</name>
        <name evidence="22">mRAGE_v20</name>
        <sequence type="described" ref="VSP_058093 VSP_058094"/>
    </isoform>
    <isoform>
        <id>Q62151-11</id>
        <name>11</name>
        <name evidence="21">mRAGE_v2</name>
        <name evidence="21">mRAGE_v5</name>
        <name evidence="21">mRAGE_v6</name>
        <name evidence="21">mRAGE_v8</name>
        <name evidence="21">mRAGE_v16</name>
        <name evidence="21">mRAGE_v17</name>
        <sequence type="described" ref="VSP_058075 VSP_058081"/>
    </isoform>
    <isoform>
        <id>Q62151-12</id>
        <name>12</name>
        <name evidence="21">mRAGE_v13</name>
        <sequence type="described" ref="VSP_058077 VSP_058079"/>
    </isoform>
    <isoform>
        <id>Q62151-13</id>
        <name>13</name>
        <name evidence="21">mRAGE_v12</name>
        <sequence type="described" ref="VSP_058078"/>
    </isoform>
</comment>
<comment type="tissue specificity">
    <text evidence="7 8 9 14">Isoform 1: Expressed at higher levels in the coronary arterioles in type 2 diabetic mice (at protein level). Endothelial cells (PubMed:18539754). Expressed in lung, kidney, brain and heart. Most prevalent isoform with the highest level in heart (PubMed:19164451). Isoform 2: Expressed in brain, lung, kidney and small intestine with the highest level in lung. Expressed in brain, lung, kidney and small intestine with the highest level in small intestine (at protein level). Detected in neurons of the cerebrum, bronchial epithelium, endothelial cells, tubular cells of kidney and epithelial cells of small intestine (at protein level). Expression is increased in the kidney of diabetic wild-type mice (at protein level), but not in the other tissues (PubMed:16503878). Expressed only in kidney. Expression is increased in the kidney of diabetic mice (PubMed:19164451). Isoform 3: Expressed in lung, kidney and heart. The second most prevalent isoform with the highest level in lung. Not expressed in brain (PubMed:19164451). Isoform 4: Expressed at very low level in lung only (PubMed:19164451). Isoform 5: Expressed at very low level in lung only (PubMed:19164451). Isoform 6: Expressed at very low level in lung only (PubMed:19164451). Isoform 7: Expressed at very low level in heart only (PubMed:19164451). Isoform 8: Expressed at very low level in lung only (PubMed:19164451). Isoform 9: Expressed at very low level in heart only (PubMed:19164451). Isoform 10: Expressed in lung, brain, heart and kidney with a very high level in kidney (PubMed:24260107). Isoform 11: Expressed in brain, kidney and heart. Not expressed in lung (PubMed:19164451). Isoform 12: Expressed at very low level in lung and kidney (PubMed:19164451). Isoform 13: Expressed at very low level in lung only (PubMed:19164451).</text>
</comment>
<comment type="PTM">
    <text evidence="1 15">Phosphorylated on its cytoplasmic domain by PKCzeta/PRKCZ upon ligand binding (By similarity). Phosphorylated by ATM following DNA damage (PubMed:28977635).</text>
</comment>
<comment type="PTM">
    <text evidence="1">Targeted by the ubiquitin E3 ligase subunit FBXO10 to mediate its ubiquitination and degradation.</text>
</comment>
<comment type="disruption phenotype">
    <text evidence="12 15 17 19">In deletion mutant mice, the elevation of serum TNF-alpha, IL6 and EDN1 and the tissue damage induced by LPS is significantly attenuated when compared with WT mice (PubMed:21270403). The lower hepatic expression of pro-inflammatory cytokines, while the activation of immune cells remains unaffected, results in improved survival after challenge with D-galactosamine (PubMed:32670276). Accumulation of fibrotic tissue and senescent lesions in lungs of mutant mice (PubMed:28977635). Lungs show a more distorted loose pattern of alveoli and the peri-alveolar region, and there is a marked reduction in pulmonary function (PubMed:28977635). Increased cellular senescence, DNA damage and higher frequency of lung carcinomas (PubMed:28977635). Renal cells have an increased frequency of enlarged nuclei with an apparent disorganization of the nuclear morphology known as karyomegaly and also display a higher frequency of micronuclei (PubMed:36807739).</text>
</comment>
<comment type="miscellaneous">
    <text evidence="16">Reverses DNA double-strand breaks in diabetic mice and improves lung and renal function.</text>
</comment>
<comment type="miscellaneous">
    <molecule>Isoform 7</molecule>
    <text evidence="9">May be produced at very low levels due to a premature stop codon in the mRNA, leading to nonsense-mediated mRNA decay.</text>
</comment>
<comment type="miscellaneous">
    <molecule>Isoform 8</molecule>
    <text evidence="9">May be produced at very low levels due to a premature stop codon in the mRNA, leading to nonsense-mediated mRNA decay.</text>
</comment>
<comment type="miscellaneous">
    <molecule>Isoform 9</molecule>
    <text evidence="9">May be produced at very low levels due to a premature stop codon in the mRNA, leading to nonsense-mediated mRNA decay.</text>
</comment>
<comment type="miscellaneous">
    <molecule>Isoform 11</molecule>
    <text evidence="9">May be produced at very low levels due to a premature stop codon in the mRNA, leading to nonsense-mediated mRNA decay.</text>
</comment>
<feature type="signal peptide" evidence="3">
    <location>
        <begin position="1"/>
        <end position="22"/>
    </location>
</feature>
<feature type="chain" id="PRO_0000014924" description="Advanced glycosylation end product-specific receptor">
    <location>
        <begin position="23"/>
        <end position="402"/>
    </location>
</feature>
<feature type="topological domain" description="Extracellular" evidence="3">
    <location>
        <begin position="23"/>
        <end position="340"/>
    </location>
</feature>
<feature type="transmembrane region" description="Helical" evidence="3">
    <location>
        <begin position="341"/>
        <end position="361"/>
    </location>
</feature>
<feature type="topological domain" description="Cytoplasmic" evidence="3">
    <location>
        <begin position="362"/>
        <end position="402"/>
    </location>
</feature>
<feature type="domain" description="Ig-like V-type">
    <location>
        <begin position="23"/>
        <end position="109"/>
    </location>
</feature>
<feature type="domain" description="Ig-like C2-type 1">
    <location>
        <begin position="123"/>
        <end position="219"/>
    </location>
</feature>
<feature type="domain" description="Ig-like C2-type 2">
    <location>
        <begin position="233"/>
        <end position="315"/>
    </location>
</feature>
<feature type="region of interest" description="Disordered" evidence="5">
    <location>
        <begin position="295"/>
        <end position="332"/>
    </location>
</feature>
<feature type="region of interest" description="Disordered" evidence="5">
    <location>
        <begin position="365"/>
        <end position="402"/>
    </location>
</feature>
<feature type="compositionally biased region" description="Acidic residues" evidence="5">
    <location>
        <begin position="376"/>
        <end position="394"/>
    </location>
</feature>
<feature type="modified residue" description="Phosphoserine; by ATM" evidence="15 34">
    <location>
        <position position="376"/>
    </location>
</feature>
<feature type="modified residue" description="Phosphoserine; by ATM" evidence="15">
    <location>
        <position position="389"/>
    </location>
</feature>
<feature type="glycosylation site" description="N-linked (GlcNAc...) asparagine" evidence="3">
    <location>
        <position position="25"/>
    </location>
</feature>
<feature type="glycosylation site" description="N-linked (GlcNAc...) asparagine" evidence="3">
    <location>
        <position position="80"/>
    </location>
</feature>
<feature type="disulfide bond" evidence="13 33">
    <location>
        <begin position="38"/>
        <end position="98"/>
    </location>
</feature>
<feature type="disulfide bond" evidence="13 33">
    <location>
        <begin position="143"/>
        <end position="206"/>
    </location>
</feature>
<feature type="disulfide bond" description="Interchain" evidence="4">
    <location>
        <position position="257"/>
    </location>
</feature>
<feature type="disulfide bond" description="Interchain" evidence="4">
    <location>
        <position position="299"/>
    </location>
</feature>
<feature type="splice variant" id="VSP_058075" description="In isoform 11." evidence="9">
    <original>AVAGGQNITARIGEPLVLSCKGAPKKPPQQLEWKLNTGRTEAWKVLSPQGGPWDSVARI</original>
    <variation>ETLPAPTLPLSSPAPTPPPVPPCPLEIPLNLGTTFQRPSPTLSYTRTPQPHLSPSTLPQ</variation>
    <location>
        <begin position="19"/>
        <end position="77"/>
    </location>
</feature>
<feature type="splice variant" id="VSP_058076" description="In isoform 9." evidence="9">
    <original>TARIGEPLVLSCKGAPKKPPQQLEWKLNTGRTEAWKVLSPQGGPWDSVARILPNGSLLL</original>
    <variation>PALCCSSLRWGTRMRAPIAAWPPTLATDLRKALLSASGSQKPAMRGQLKALWVSLGWVR</variation>
    <location>
        <begin position="27"/>
        <end position="85"/>
    </location>
</feature>
<feature type="splice variant" id="VSP_058077" description="In isoform 12." evidence="9">
    <original>IGEPLVLSCKG</original>
    <variation>KARRMRRNVQS</variation>
    <location>
        <begin position="30"/>
        <end position="40"/>
    </location>
</feature>
<feature type="splice variant" id="VSP_058078" description="In isoform 13.">
    <location>
        <begin position="31"/>
        <end position="402"/>
    </location>
</feature>
<feature type="splice variant" id="VSP_058079" description="In isoform 12." evidence="9">
    <location>
        <begin position="41"/>
        <end position="402"/>
    </location>
</feature>
<feature type="splice variant" id="VSP_058080" description="In isoform 4." evidence="9">
    <location>
        <begin position="54"/>
        <end position="62"/>
    </location>
</feature>
<feature type="splice variant" id="VSP_058081" description="In isoform 11." evidence="9">
    <location>
        <begin position="78"/>
        <end position="402"/>
    </location>
</feature>
<feature type="splice variant" id="VSP_058082" description="In isoform 9." evidence="9">
    <location>
        <begin position="86"/>
        <end position="402"/>
    </location>
</feature>
<feature type="splice variant" id="VSP_058083" description="In isoform 7." evidence="9">
    <original>QIPGKPEIVDPASELTASVPN</original>
    <variation>RKGPRLSHFAFIKKPSCTPNP</variation>
    <location>
        <begin position="118"/>
        <end position="138"/>
    </location>
</feature>
<feature type="splice variant" id="VSP_058084" description="In isoform 8." evidence="9">
    <original>IPGKPEIVDPASELTASVP</original>
    <variation>KPAMRGQLKALWVSLGWVR</variation>
    <location>
        <begin position="119"/>
        <end position="137"/>
    </location>
</feature>
<feature type="splice variant" id="VSP_058085" description="In isoform 8." evidence="9">
    <location>
        <begin position="138"/>
        <end position="402"/>
    </location>
</feature>
<feature type="splice variant" id="VSP_058086" description="In isoform 7." evidence="9">
    <location>
        <begin position="139"/>
        <end position="402"/>
    </location>
</feature>
<feature type="splice variant" id="VSP_058087" description="In isoform 6." evidence="9">
    <original>T</original>
    <variation>G</variation>
    <location>
        <position position="153"/>
    </location>
</feature>
<feature type="splice variant" id="VSP_058088" description="In isoform 6." evidence="9">
    <location>
        <begin position="154"/>
        <end position="402"/>
    </location>
</feature>
<feature type="splice variant" id="VSP_058089" description="In isoform 5." evidence="9">
    <location>
        <begin position="188"/>
        <end position="382"/>
    </location>
</feature>
<feature type="splice variant" id="VSP_058090" description="In isoform 3 and isoform 4." evidence="9">
    <location>
        <begin position="320"/>
        <end position="328"/>
    </location>
</feature>
<feature type="splice variant" id="VSP_058091" description="In isoform 2." evidence="7 9">
    <original>SVGE</original>
    <variation>EGLD</variation>
    <location>
        <begin position="330"/>
        <end position="333"/>
    </location>
</feature>
<feature type="splice variant" id="VSP_058092" description="In isoform 2." evidence="7 9">
    <location>
        <begin position="334"/>
        <end position="402"/>
    </location>
</feature>
<feature type="splice variant" id="VSP_058093" description="In isoform 10." evidence="14">
    <original>KAPESQEDEEERA</original>
    <variation>PRKARRMRRNVQS</variation>
    <location>
        <begin position="372"/>
        <end position="384"/>
    </location>
</feature>
<feature type="splice variant" id="VSP_058094" description="In isoform 10." evidence="14">
    <location>
        <begin position="385"/>
        <end position="402"/>
    </location>
</feature>
<feature type="mutagenesis site" description="Reduces phosphorylation. Abolishes phosphorylation and ability to reduce DNA damage; when associated with A-389." evidence="15">
    <original>S</original>
    <variation>A</variation>
    <location>
        <position position="376"/>
    </location>
</feature>
<feature type="mutagenesis site" description="Phosphomimetic mutant which does not lose the ability to reduce DNA damage; when associated with E-389." evidence="15">
    <original>S</original>
    <variation>E</variation>
    <location>
        <position position="376"/>
    </location>
</feature>
<feature type="mutagenesis site" description="Reduces phosphorylation. Abolishes phosphorylation and ability to reduce DNA damage; when associated with A-376." evidence="15">
    <original>S</original>
    <variation>A</variation>
    <location>
        <position position="389"/>
    </location>
</feature>
<feature type="mutagenesis site" description="Phosphomimetic mutant which does not lose the ability to reduce DNA damage; when associated with E-389." evidence="15">
    <original>S</original>
    <variation>E</variation>
    <location>
        <position position="389"/>
    </location>
</feature>
<feature type="sequence conflict" description="In Ref. 3; ACK28146." evidence="23" ref="3">
    <original>ARI</original>
    <variation>TQA</variation>
    <location>
        <begin position="28"/>
        <end position="30"/>
    </location>
</feature>
<feature type="sequence conflict" description="In Ref. 1; AAA40040 and 2; BAE72665." evidence="23" ref="1 2">
    <original>R</original>
    <variation>Q</variation>
    <location>
        <position position="76"/>
    </location>
</feature>
<feature type="sequence conflict" description="In Ref. 1; AAA40040 and 2; BAE72665." evidence="23" ref="1 2">
    <original>G</original>
    <variation>GT</variation>
    <location>
        <position position="199"/>
    </location>
</feature>
<feature type="sequence conflict" description="In Ref. 1; AAA40040 and 2; BAE72665." evidence="23" ref="1 2">
    <original>E</original>
    <variation>A</variation>
    <location>
        <position position="292"/>
    </location>
</feature>
<gene>
    <name type="primary">Ager</name>
    <name type="synonym">Rage</name>
</gene>
<reference key="1">
    <citation type="journal article" date="1997" name="Mol. Pharmacol.">
        <title>Recombinant advanced glycation end product receptor pharmacokinetics in normal and diabetic rats.</title>
        <authorList>
            <person name="Renard C."/>
            <person name="Chappey O."/>
            <person name="Wautier M.P."/>
            <person name="Nagashima M."/>
            <person name="Lundh E."/>
            <person name="Morser J."/>
            <person name="Zhao L."/>
            <person name="Schmidt A.M."/>
            <person name="Scherrmann J.M."/>
            <person name="Wautier J.-L."/>
        </authorList>
    </citation>
    <scope>NUCLEOTIDE SEQUENCE [MRNA] (ISOFORM 1)</scope>
    <source>
        <strain>BALB/cJ</strain>
        <tissue>Lung</tissue>
    </source>
</reference>
<reference evidence="28" key="2">
    <citation type="journal article" date="2006" name="Biochem. J.">
        <title>Identification of mouse orthologue of endogenous secretory receptor for advanced glycation end-products: structure, function and expression.</title>
        <authorList>
            <person name="Harashima A."/>
            <person name="Yamamoto Y."/>
            <person name="Cheng C."/>
            <person name="Tsuneyama K."/>
            <person name="Myint K.M."/>
            <person name="Takeuchi A."/>
            <person name="Yoshimura K."/>
            <person name="Li H."/>
            <person name="Watanabe T."/>
            <person name="Takasawa S."/>
            <person name="Okamoto H."/>
            <person name="Yonekura H."/>
            <person name="Yamamoto H."/>
        </authorList>
    </citation>
    <scope>NUCLEOTIDE SEQUENCE [MRNA] (ISOFORM 2)</scope>
    <scope>FUNCTION (ISOFORM 2)</scope>
    <scope>SUBCELLULAR LOCATION (ISOFORM 2)</scope>
    <scope>TISSUE SPECIFICITY</scope>
    <source>
        <strain evidence="20">C57BL/6J</strain>
        <tissue evidence="20">Brain</tissue>
    </source>
</reference>
<reference evidence="26" key="3">
    <citation type="journal article" date="2009" name="FASEB J.">
        <title>Alternative splicing of the murine receptor for advanced glycation end-products (RAGE) gene.</title>
        <authorList>
            <person name="Kalea A.Z."/>
            <person name="Reiniger N."/>
            <person name="Yang H."/>
            <person name="Arriero M."/>
            <person name="Schmidt A.M."/>
            <person name="Hudson B.I."/>
        </authorList>
    </citation>
    <scope>NUCLEOTIDE SEQUENCE [MRNA] (ISOFORMS 1; 2; 3; 4; 5; 6; 7; 8; 9; 11; 12 AND 13)</scope>
    <scope>SPLICE ISOFORMS THAT ARE POTENTIAL NMD TARGETS</scope>
    <scope>TISSUE SPECIFICITY</scope>
    <source>
        <strain evidence="26">BALB/cJ</strain>
    </source>
</reference>
<reference evidence="27" key="4">
    <citation type="journal article" date="2013" name="PLoS ONE">
        <title>Alternative splicing of the RAGE cytoplasmic domain regulates cell signaling and function.</title>
        <authorList>
            <person name="Jules J."/>
            <person name="Maiguel D."/>
            <person name="Hudson B.I."/>
        </authorList>
    </citation>
    <scope>NUCLEOTIDE SEQUENCE [MRNA] (ISOFORM 10)</scope>
    <scope>FUNCTION (ISOFORM 10)</scope>
    <scope>SUBCELLULAR LOCATION (ISOFORM 10)</scope>
    <scope>TISSUE SPECIFICITY</scope>
    <source>
        <tissue evidence="27">Lung</tissue>
    </source>
</reference>
<reference evidence="24" key="5">
    <citation type="journal article" date="2003" name="Genome Res.">
        <title>Analysis of the gene-dense major histocompatibility complex class III region and its comparison to mouse.</title>
        <authorList>
            <person name="Xie T."/>
            <person name="Rowen L."/>
            <person name="Aguado B."/>
            <person name="Ahearn M.E."/>
            <person name="Madan A."/>
            <person name="Qin S."/>
            <person name="Campbell R.D."/>
            <person name="Hood L."/>
        </authorList>
    </citation>
    <scope>NUCLEOTIDE SEQUENCE [LARGE SCALE GENOMIC DNA]</scope>
    <source>
        <strain>129</strain>
    </source>
</reference>
<reference evidence="29 32" key="6">
    <citation type="journal article" date="2009" name="PLoS Biol.">
        <title>Lineage-specific biology revealed by a finished genome assembly of the mouse.</title>
        <authorList>
            <person name="Church D.M."/>
            <person name="Goodstadt L."/>
            <person name="Hillier L.W."/>
            <person name="Zody M.C."/>
            <person name="Goldstein S."/>
            <person name="She X."/>
            <person name="Bult C.J."/>
            <person name="Agarwala R."/>
            <person name="Cherry J.L."/>
            <person name="DiCuccio M."/>
            <person name="Hlavina W."/>
            <person name="Kapustin Y."/>
            <person name="Meric P."/>
            <person name="Maglott D."/>
            <person name="Birtle Z."/>
            <person name="Marques A.C."/>
            <person name="Graves T."/>
            <person name="Zhou S."/>
            <person name="Teague B."/>
            <person name="Potamousis K."/>
            <person name="Churas C."/>
            <person name="Place M."/>
            <person name="Herschleb J."/>
            <person name="Runnheim R."/>
            <person name="Forrest D."/>
            <person name="Amos-Landgraf J."/>
            <person name="Schwartz D.C."/>
            <person name="Cheng Z."/>
            <person name="Lindblad-Toh K."/>
            <person name="Eichler E.E."/>
            <person name="Ponting C.P."/>
        </authorList>
    </citation>
    <scope>NUCLEOTIDE SEQUENCE [LARGE SCALE GENOMIC DNA]</scope>
    <source>
        <strain evidence="32">C57BL/6J</strain>
    </source>
</reference>
<reference evidence="30 31" key="7">
    <citation type="submission" date="2005-09" db="EMBL/GenBank/DDBJ databases">
        <authorList>
            <person name="Mural R.J."/>
            <person name="Adams M.D."/>
            <person name="Myers E.W."/>
            <person name="Smith H.O."/>
            <person name="Venter J.C."/>
        </authorList>
    </citation>
    <scope>NUCLEOTIDE SEQUENCE [LARGE SCALE GENOMIC DNA]</scope>
</reference>
<reference evidence="25" key="8">
    <citation type="journal article" date="2004" name="Genome Res.">
        <title>The status, quality, and expansion of the NIH full-length cDNA project: the Mammalian Gene Collection (MGC).</title>
        <authorList>
            <consortium name="The MGC Project Team"/>
        </authorList>
    </citation>
    <scope>NUCLEOTIDE SEQUENCE [LARGE SCALE MRNA] (ISOFORM 1)</scope>
</reference>
<reference key="9">
    <citation type="journal article" date="1999" name="Cell">
        <title>RAGE mediates a novel proinflammatory axis: a central cell surface receptor for S100/calgranulin polypeptides.</title>
        <authorList>
            <person name="Hofmann M.A."/>
            <person name="Drury S."/>
            <person name="Fu C."/>
            <person name="Qu W."/>
            <person name="Taguchi A."/>
            <person name="Lu Y."/>
            <person name="Avila C."/>
            <person name="Kambham N."/>
            <person name="Bierhaus A."/>
            <person name="Nawroth P."/>
            <person name="Neurath M.F."/>
            <person name="Slattery T."/>
            <person name="Beach D."/>
            <person name="McClary J."/>
            <person name="Nagashima M."/>
            <person name="Morser J."/>
            <person name="Stern D."/>
            <person name="Schmidt A.M."/>
        </authorList>
    </citation>
    <scope>FUNCTION</scope>
    <scope>INTERACTION WITH S100A12</scope>
    <source>
        <tissue>Lung</tissue>
    </source>
</reference>
<reference key="10">
    <citation type="journal article" date="2008" name="Am. J. Physiol.">
        <title>AGE/RAGE produces endothelial dysfunction in coronary arterioles in type 2 diabetic mice.</title>
        <authorList>
            <person name="Gao X."/>
            <person name="Zhang H."/>
            <person name="Schmidt A.M."/>
            <person name="Zhang C."/>
        </authorList>
    </citation>
    <scope>FUNCTION</scope>
    <scope>TISSUE SPECIFICITY</scope>
</reference>
<reference key="11">
    <citation type="journal article" date="2009" name="Proc. Natl. Acad. Sci. U.S.A.">
        <title>RAGE-mediated signaling contributes to intraneuronal transport of amyloid-{beta} and neuronal dysfunction.</title>
        <authorList>
            <person name="Takuma K."/>
            <person name="Fang F."/>
            <person name="Zhang W."/>
            <person name="Yan S."/>
            <person name="Fukuzaki E."/>
            <person name="Du H."/>
            <person name="Sosunov A."/>
            <person name="McKhann G."/>
            <person name="Funatsu Y."/>
            <person name="Nakamichi N."/>
            <person name="Nagai T."/>
            <person name="Mizoguchi H."/>
            <person name="Ibi D."/>
            <person name="Hori O."/>
            <person name="Ogawa S."/>
            <person name="Stern D.M."/>
            <person name="Yamada K."/>
            <person name="Yan S.S."/>
        </authorList>
    </citation>
    <scope>FUNCTION</scope>
    <scope>INTERACTION WITH APP</scope>
</reference>
<reference key="12">
    <citation type="journal article" date="2010" name="Cell">
        <title>A tissue-specific atlas of mouse protein phosphorylation and expression.</title>
        <authorList>
            <person name="Huttlin E.L."/>
            <person name="Jedrychowski M.P."/>
            <person name="Elias J.E."/>
            <person name="Goswami T."/>
            <person name="Rad R."/>
            <person name="Beausoleil S.A."/>
            <person name="Villen J."/>
            <person name="Haas W."/>
            <person name="Sowa M.E."/>
            <person name="Gygi S.P."/>
        </authorList>
    </citation>
    <scope>PHOSPHORYLATION [LARGE SCALE ANALYSIS] AT SER-376</scope>
    <scope>IDENTIFICATION BY MASS SPECTROMETRY [LARGE SCALE ANALYSIS]</scope>
    <source>
        <tissue>Lung</tissue>
    </source>
</reference>
<reference key="13">
    <citation type="journal article" date="2010" name="FASEB J.">
        <title>RAGE-dependent signaling in microglia contributes to neuroinflammation, Abeta accumulation, and impaired learning/memory in a mouse model of Alzheimer's disease.</title>
        <authorList>
            <person name="Fang F."/>
            <person name="Lue L.-F."/>
            <person name="Yan S."/>
            <person name="Xu H."/>
            <person name="Luddy J.S."/>
            <person name="Chen D."/>
            <person name="Walker D.G."/>
            <person name="Stern D.M."/>
            <person name="Yan S."/>
            <person name="Schmidt A.M."/>
            <person name="Chen J.X."/>
            <person name="Yan S.S."/>
        </authorList>
    </citation>
    <scope>FUNCTION</scope>
</reference>
<reference key="14">
    <citation type="journal article" date="2011" name="J. Immunol.">
        <title>Septic shock is associated with receptor for advanced glycation end products ligation of LPS.</title>
        <authorList>
            <person name="Yamamoto Y."/>
            <person name="Harashima A."/>
            <person name="Saito H."/>
            <person name="Tsuneyama K."/>
            <person name="Munesue S."/>
            <person name="Motoyoshi S."/>
            <person name="Han D."/>
            <person name="Watanabe T."/>
            <person name="Asano M."/>
            <person name="Takasawa S."/>
            <person name="Okamoto H."/>
            <person name="Shimura S."/>
            <person name="Karasawa T."/>
            <person name="Yonekura H."/>
            <person name="Yamamoto H."/>
        </authorList>
    </citation>
    <scope>FUNCTION</scope>
    <scope>DISRUPTION PHENOTYPE</scope>
</reference>
<reference key="15">
    <citation type="journal article" date="2020" name="Front. Immunol.">
        <title>The Receptor for Advanced Glycation Endproducts (RAGE) Contributes to Severe Inflammatory Liver Injury in Mice.</title>
        <authorList>
            <person name="Weinhage T."/>
            <person name="Wirth T."/>
            <person name="Schuetz P."/>
            <person name="Becker P."/>
            <person name="Lueken A."/>
            <person name="Skryabin B.V."/>
            <person name="Wittkowski H."/>
            <person name="Foell D."/>
        </authorList>
    </citation>
    <scope>FUNCTION</scope>
    <scope>DISRUPTION PHENOTYPE</scope>
</reference>
<reference evidence="33" key="16">
    <citation type="journal article" date="2013" name="ACS Chem. Biol.">
        <title>Stable RAGE-heparan sulfate complexes are essential for signal transduction.</title>
        <authorList>
            <person name="Xu D."/>
            <person name="Young J.H."/>
            <person name="Krahn J.M."/>
            <person name="Song D."/>
            <person name="Corbett K.D."/>
            <person name="Chazin W.J."/>
            <person name="Pedersen L.C."/>
            <person name="Esko J.D."/>
        </authorList>
    </citation>
    <scope>X-RAY CRYSTALLOGRAPHY (3.50 ANGSTROMS) OF 23-230</scope>
    <scope>DISULFIDE BONDS</scope>
    <scope>SUBUNIT</scope>
</reference>
<reference key="17">
    <citation type="journal article" date="2017" name="Nucleic Acids Res.">
        <title>Homeostatic nuclear RAGE-ATM interaction is essential for efficient DNA repair.</title>
        <authorList>
            <person name="Kumar V."/>
            <person name="Fleming T."/>
            <person name="Terjung S."/>
            <person name="Gorzelanny C."/>
            <person name="Gebhardt C."/>
            <person name="Agrawal R."/>
            <person name="Mall M.A."/>
            <person name="Ranzinger J."/>
            <person name="Zeier M."/>
            <person name="Madhusudhan T."/>
            <person name="Ranjan S."/>
            <person name="Isermann B."/>
            <person name="Liesz A."/>
            <person name="Deshpande D."/>
            <person name="Haering H.U."/>
            <person name="Biswas S.K."/>
            <person name="Reynolds P.R."/>
            <person name="Hammes H.P."/>
            <person name="Peperkok R."/>
            <person name="Angel P."/>
            <person name="Herzig S."/>
            <person name="Nawroth P.P."/>
        </authorList>
    </citation>
    <scope>FUNCTION</scope>
    <scope>INTERACTION WITH MRE11</scope>
    <scope>SUBCELLULAR LOCATION</scope>
    <scope>DISRUPTION PHENOTYPE</scope>
    <scope>PHOSPHORYLATION AT SER-376 AND SER-389</scope>
    <scope>MUTAGENESIS OF SER-376 AND SER-389</scope>
</reference>
<reference key="18">
    <citation type="journal article" date="2020" name="EMBO J.">
        <title>Compromised DNA repair is responsible for diabetes-associated fibrosis.</title>
        <authorList>
            <person name="Kumar V."/>
            <person name="Agrawal R."/>
            <person name="Pandey A."/>
            <person name="Kopf S."/>
            <person name="Hoeffgen M."/>
            <person name="Kaymak S."/>
            <person name="Bandapalli O.R."/>
            <person name="Gorbunova V."/>
            <person name="Seluanov A."/>
            <person name="Mall M.A."/>
            <person name="Herzig S."/>
            <person name="Nawroth P.P."/>
        </authorList>
    </citation>
    <scope>ROLE IN REVERSAL OF DIABETES-ASSOCIATED DNA DAMAGE</scope>
</reference>
<reference key="19">
    <citation type="journal article" date="2022" name="Commun. Biol.">
        <title>Receptor for advanced glycation end-products (RAGE) mediates phagocytosis in nonprofessional phagocytes.</title>
        <authorList>
            <person name="Yang Y."/>
            <person name="Liu G."/>
            <person name="Li F."/>
            <person name="Carey L.B."/>
            <person name="Sun C."/>
            <person name="Ling K."/>
            <person name="Tachikawa H."/>
            <person name="Fujita M."/>
            <person name="Gao X.D."/>
            <person name="Nakanishi H."/>
        </authorList>
    </citation>
    <scope>FUNCTION</scope>
</reference>
<reference key="20">
    <citation type="journal article" date="2023" name="Nucleic Acids Res.">
        <title>The importance of nuclear RAGE-Mcm2 axis in diabetes or cancer-associated replication stress.</title>
        <authorList>
            <person name="Han Z."/>
            <person name="Andrs M."/>
            <person name="Madhavan B.K."/>
            <person name="Kaymak S."/>
            <person name="Sulaj A."/>
            <person name="Kender Z."/>
            <person name="Kopf S."/>
            <person name="Kihm L."/>
            <person name="Pepperkok R."/>
            <person name="Janscak P."/>
            <person name="Nawroth P."/>
            <person name="Kumar V."/>
        </authorList>
    </citation>
    <scope>INTERACTION WITH MCM2</scope>
    <scope>DISRUPTION PHENOTYPE</scope>
</reference>
<keyword id="KW-0002">3D-structure</keyword>
<keyword id="KW-0025">Alternative splicing</keyword>
<keyword id="KW-1003">Cell membrane</keyword>
<keyword id="KW-0966">Cell projection</keyword>
<keyword id="KW-1015">Disulfide bond</keyword>
<keyword id="KW-0227">DNA damage</keyword>
<keyword id="KW-0234">DNA repair</keyword>
<keyword id="KW-0235">DNA replication</keyword>
<keyword id="KW-0238">DNA-binding</keyword>
<keyword id="KW-0967">Endosome</keyword>
<keyword id="KW-0325">Glycoprotein</keyword>
<keyword id="KW-0393">Immunoglobulin domain</keyword>
<keyword id="KW-0395">Inflammatory response</keyword>
<keyword id="KW-0472">Membrane</keyword>
<keyword id="KW-0539">Nucleus</keyword>
<keyword id="KW-0581">Phagocytosis</keyword>
<keyword id="KW-0597">Phosphoprotein</keyword>
<keyword id="KW-0675">Receptor</keyword>
<keyword id="KW-1185">Reference proteome</keyword>
<keyword id="KW-0677">Repeat</keyword>
<keyword id="KW-0694">RNA-binding</keyword>
<keyword id="KW-0964">Secreted</keyword>
<keyword id="KW-0732">Signal</keyword>
<keyword id="KW-0812">Transmembrane</keyword>
<keyword id="KW-1133">Transmembrane helix</keyword>
<keyword id="KW-0832">Ubl conjugation</keyword>